<name>DCE2_HUMAN</name>
<organism>
    <name type="scientific">Homo sapiens</name>
    <name type="common">Human</name>
    <dbReference type="NCBI Taxonomy" id="9606"/>
    <lineage>
        <taxon>Eukaryota</taxon>
        <taxon>Metazoa</taxon>
        <taxon>Chordata</taxon>
        <taxon>Craniata</taxon>
        <taxon>Vertebrata</taxon>
        <taxon>Euteleostomi</taxon>
        <taxon>Mammalia</taxon>
        <taxon>Eutheria</taxon>
        <taxon>Euarchontoglires</taxon>
        <taxon>Primates</taxon>
        <taxon>Haplorrhini</taxon>
        <taxon>Catarrhini</taxon>
        <taxon>Hominidae</taxon>
        <taxon>Homo</taxon>
    </lineage>
</organism>
<keyword id="KW-0002">3D-structure</keyword>
<keyword id="KW-1003">Cell membrane</keyword>
<keyword id="KW-0966">Cell projection</keyword>
<keyword id="KW-0963">Cytoplasm</keyword>
<keyword id="KW-0968">Cytoplasmic vesicle</keyword>
<keyword id="KW-0210">Decarboxylase</keyword>
<keyword id="KW-0333">Golgi apparatus</keyword>
<keyword id="KW-0449">Lipoprotein</keyword>
<keyword id="KW-0456">Lyase</keyword>
<keyword id="KW-0472">Membrane</keyword>
<keyword id="KW-0530">Neurotransmitter biosynthesis</keyword>
<keyword id="KW-0564">Palmitate</keyword>
<keyword id="KW-0597">Phosphoprotein</keyword>
<keyword id="KW-1267">Proteomics identification</keyword>
<keyword id="KW-0663">Pyridoxal phosphate</keyword>
<keyword id="KW-1185">Reference proteome</keyword>
<keyword id="KW-0770">Synapse</keyword>
<protein>
    <recommendedName>
        <fullName evidence="7">Glutamate decarboxylase 2</fullName>
        <ecNumber evidence="8">4.1.1.15</ecNumber>
    </recommendedName>
    <alternativeName>
        <fullName>65 kDa glutamic acid decarboxylase</fullName>
        <shortName>GAD-65</shortName>
    </alternativeName>
    <alternativeName>
        <fullName>Glutamate decarboxylase 65 kDa isoform</fullName>
    </alternativeName>
</protein>
<dbReference type="EC" id="4.1.1.15" evidence="8"/>
<dbReference type="EMBL" id="M81882">
    <property type="protein sequence ID" value="AAA62367.1"/>
    <property type="molecule type" value="mRNA"/>
</dbReference>
<dbReference type="EMBL" id="M74826">
    <property type="protein sequence ID" value="AAA58491.1"/>
    <property type="molecule type" value="mRNA"/>
</dbReference>
<dbReference type="EMBL" id="AY340073">
    <property type="protein sequence ID" value="AAP88040.1"/>
    <property type="molecule type" value="Genomic_DNA"/>
</dbReference>
<dbReference type="EMBL" id="X69936">
    <property type="protein sequence ID" value="CAA49554.1"/>
    <property type="status" value="ALT_INIT"/>
    <property type="molecule type" value="mRNA"/>
</dbReference>
<dbReference type="EMBL" id="M70435">
    <property type="protein sequence ID" value="AAA52513.1"/>
    <property type="molecule type" value="mRNA"/>
</dbReference>
<dbReference type="CCDS" id="CCDS7149.1"/>
<dbReference type="PIR" id="A41935">
    <property type="entry name" value="A41292"/>
</dbReference>
<dbReference type="RefSeq" id="NP_000809.1">
    <property type="nucleotide sequence ID" value="NM_000818.3"/>
</dbReference>
<dbReference type="RefSeq" id="NP_001127838.1">
    <property type="nucleotide sequence ID" value="NM_001134366.2"/>
</dbReference>
<dbReference type="PDB" id="1ES0">
    <property type="method" value="X-ray"/>
    <property type="resolution" value="2.60 A"/>
    <property type="chains" value="B=207-220"/>
</dbReference>
<dbReference type="PDB" id="2OKK">
    <property type="method" value="X-ray"/>
    <property type="resolution" value="2.30 A"/>
    <property type="chains" value="A=88-584"/>
</dbReference>
<dbReference type="PDB" id="7LZ6">
    <property type="method" value="EM"/>
    <property type="resolution" value="7.30 A"/>
    <property type="chains" value="A/B=88-584"/>
</dbReference>
<dbReference type="PDBsum" id="1ES0"/>
<dbReference type="PDBsum" id="2OKK"/>
<dbReference type="PDBsum" id="7LZ6"/>
<dbReference type="EMDB" id="EMD-23603"/>
<dbReference type="SMR" id="Q05329"/>
<dbReference type="BioGRID" id="108846">
    <property type="interactions" value="47"/>
</dbReference>
<dbReference type="ComplexPortal" id="CPX-3033">
    <property type="entry name" value="Glutamate decarboxylase 2 complex"/>
</dbReference>
<dbReference type="ComplexPortal" id="CPX-3065">
    <property type="entry name" value="Glutamate decarboxylase 1/2 complex"/>
</dbReference>
<dbReference type="DIP" id="DIP-29293N"/>
<dbReference type="FunCoup" id="Q05329">
    <property type="interactions" value="602"/>
</dbReference>
<dbReference type="IntAct" id="Q05329">
    <property type="interactions" value="41"/>
</dbReference>
<dbReference type="STRING" id="9606.ENSP00000365437"/>
<dbReference type="ChEMBL" id="CHEMBL2952"/>
<dbReference type="DrugBank" id="DB00142">
    <property type="generic name" value="Glutamic acid"/>
</dbReference>
<dbReference type="DrugBank" id="DB00114">
    <property type="generic name" value="Pyridoxal phosphate"/>
</dbReference>
<dbReference type="iPTMnet" id="Q05329"/>
<dbReference type="PhosphoSitePlus" id="Q05329"/>
<dbReference type="SwissPalm" id="Q05329"/>
<dbReference type="BioMuta" id="GAD2"/>
<dbReference type="DMDM" id="1352216"/>
<dbReference type="jPOST" id="Q05329"/>
<dbReference type="MassIVE" id="Q05329"/>
<dbReference type="PaxDb" id="9606-ENSP00000365437"/>
<dbReference type="PeptideAtlas" id="Q05329"/>
<dbReference type="ProteomicsDB" id="58319"/>
<dbReference type="ABCD" id="Q05329">
    <property type="antibodies" value="12 sequenced antibodies"/>
</dbReference>
<dbReference type="Antibodypedia" id="3635">
    <property type="antibodies" value="768 antibodies from 43 providers"/>
</dbReference>
<dbReference type="DNASU" id="2572"/>
<dbReference type="Ensembl" id="ENST00000259271.7">
    <property type="protein sequence ID" value="ENSP00000259271.3"/>
    <property type="gene ID" value="ENSG00000136750.13"/>
</dbReference>
<dbReference type="Ensembl" id="ENST00000376261.8">
    <property type="protein sequence ID" value="ENSP00000365437.3"/>
    <property type="gene ID" value="ENSG00000136750.13"/>
</dbReference>
<dbReference type="GeneID" id="2572"/>
<dbReference type="KEGG" id="hsa:2572"/>
<dbReference type="MANE-Select" id="ENST00000376261.8">
    <property type="protein sequence ID" value="ENSP00000365437.3"/>
    <property type="RefSeq nucleotide sequence ID" value="NM_001134366.2"/>
    <property type="RefSeq protein sequence ID" value="NP_001127838.1"/>
</dbReference>
<dbReference type="AGR" id="HGNC:4093"/>
<dbReference type="CTD" id="2572"/>
<dbReference type="DisGeNET" id="2572"/>
<dbReference type="GeneCards" id="GAD2"/>
<dbReference type="HGNC" id="HGNC:4093">
    <property type="gene designation" value="GAD2"/>
</dbReference>
<dbReference type="HPA" id="ENSG00000136750">
    <property type="expression patterns" value="Tissue enriched (brain)"/>
</dbReference>
<dbReference type="MIM" id="138275">
    <property type="type" value="gene"/>
</dbReference>
<dbReference type="neXtProt" id="NX_Q05329"/>
<dbReference type="OpenTargets" id="ENSG00000136750"/>
<dbReference type="PharmGKB" id="PA28508"/>
<dbReference type="VEuPathDB" id="HostDB:ENSG00000136750"/>
<dbReference type="eggNOG" id="KOG0629">
    <property type="taxonomic scope" value="Eukaryota"/>
</dbReference>
<dbReference type="GeneTree" id="ENSGT00940000157951"/>
<dbReference type="HOGENOM" id="CLU_011856_0_0_1"/>
<dbReference type="InParanoid" id="Q05329"/>
<dbReference type="OMA" id="AGMVIFK"/>
<dbReference type="OrthoDB" id="392571at2759"/>
<dbReference type="PAN-GO" id="Q05329">
    <property type="GO annotations" value="4 GO annotations based on evolutionary models"/>
</dbReference>
<dbReference type="PhylomeDB" id="Q05329"/>
<dbReference type="TreeFam" id="TF314688"/>
<dbReference type="BioCyc" id="MetaCyc:HS06208-MONOMER"/>
<dbReference type="BRENDA" id="4.1.1.15">
    <property type="organism ID" value="2681"/>
</dbReference>
<dbReference type="PathwayCommons" id="Q05329"/>
<dbReference type="Reactome" id="R-HSA-888568">
    <property type="pathway name" value="GABA synthesis"/>
</dbReference>
<dbReference type="Reactome" id="R-HSA-888590">
    <property type="pathway name" value="GABA synthesis, release, reuptake and degradation"/>
</dbReference>
<dbReference type="Reactome" id="R-HSA-9022927">
    <property type="pathway name" value="MECP2 regulates transcription of genes involved in GABA signaling"/>
</dbReference>
<dbReference type="SABIO-RK" id="Q05329"/>
<dbReference type="SignaLink" id="Q05329"/>
<dbReference type="SIGNOR" id="Q05329"/>
<dbReference type="BioGRID-ORCS" id="2572">
    <property type="hits" value="12 hits in 1152 CRISPR screens"/>
</dbReference>
<dbReference type="ChiTaRS" id="GAD2">
    <property type="organism name" value="human"/>
</dbReference>
<dbReference type="EvolutionaryTrace" id="Q05329"/>
<dbReference type="GeneWiki" id="GAD2"/>
<dbReference type="GenomeRNAi" id="2572"/>
<dbReference type="Pharos" id="Q05329">
    <property type="development level" value="Tbio"/>
</dbReference>
<dbReference type="PRO" id="PR:Q05329"/>
<dbReference type="Proteomes" id="UP000005640">
    <property type="component" value="Chromosome 10"/>
</dbReference>
<dbReference type="RNAct" id="Q05329">
    <property type="molecule type" value="protein"/>
</dbReference>
<dbReference type="Bgee" id="ENSG00000136750">
    <property type="expression patterns" value="Expressed in islet of Langerhans and 90 other cell types or tissues"/>
</dbReference>
<dbReference type="ExpressionAtlas" id="Q05329">
    <property type="expression patterns" value="baseline and differential"/>
</dbReference>
<dbReference type="GO" id="GO:0030424">
    <property type="term" value="C:axon"/>
    <property type="evidence" value="ECO:0007669"/>
    <property type="project" value="Ensembl"/>
</dbReference>
<dbReference type="GO" id="GO:0061202">
    <property type="term" value="C:clathrin-sculpted gamma-aminobutyric acid transport vesicle membrane"/>
    <property type="evidence" value="ECO:0000304"/>
    <property type="project" value="Reactome"/>
</dbReference>
<dbReference type="GO" id="GO:0005737">
    <property type="term" value="C:cytoplasm"/>
    <property type="evidence" value="ECO:0000318"/>
    <property type="project" value="GO_Central"/>
</dbReference>
<dbReference type="GO" id="GO:0005829">
    <property type="term" value="C:cytosol"/>
    <property type="evidence" value="ECO:0007669"/>
    <property type="project" value="UniProtKB-SubCell"/>
</dbReference>
<dbReference type="GO" id="GO:0000139">
    <property type="term" value="C:Golgi membrane"/>
    <property type="evidence" value="ECO:0007669"/>
    <property type="project" value="UniProtKB-SubCell"/>
</dbReference>
<dbReference type="GO" id="GO:0005886">
    <property type="term" value="C:plasma membrane"/>
    <property type="evidence" value="ECO:0000304"/>
    <property type="project" value="Reactome"/>
</dbReference>
<dbReference type="GO" id="GO:0042734">
    <property type="term" value="C:presynaptic membrane"/>
    <property type="evidence" value="ECO:0007669"/>
    <property type="project" value="UniProtKB-SubCell"/>
</dbReference>
<dbReference type="GO" id="GO:0004351">
    <property type="term" value="F:glutamate decarboxylase activity"/>
    <property type="evidence" value="ECO:0000318"/>
    <property type="project" value="GO_Central"/>
</dbReference>
<dbReference type="GO" id="GO:0030170">
    <property type="term" value="F:pyridoxal phosphate binding"/>
    <property type="evidence" value="ECO:0007669"/>
    <property type="project" value="InterPro"/>
</dbReference>
<dbReference type="GO" id="GO:0007268">
    <property type="term" value="P:chemical synaptic transmission"/>
    <property type="evidence" value="ECO:0000304"/>
    <property type="project" value="ProtInc"/>
</dbReference>
<dbReference type="GO" id="GO:0006540">
    <property type="term" value="P:gamma-aminobutyrate shunt"/>
    <property type="evidence" value="ECO:0000318"/>
    <property type="project" value="GO_Central"/>
</dbReference>
<dbReference type="GO" id="GO:0009449">
    <property type="term" value="P:gamma-aminobutyric acid biosynthetic process"/>
    <property type="evidence" value="ECO:0000318"/>
    <property type="project" value="GO_Central"/>
</dbReference>
<dbReference type="CDD" id="cd06450">
    <property type="entry name" value="DOPA_deC_like"/>
    <property type="match status" value="1"/>
</dbReference>
<dbReference type="FunFam" id="3.40.640.10:FF:000016">
    <property type="entry name" value="Glutamate decarboxylase like 1"/>
    <property type="match status" value="1"/>
</dbReference>
<dbReference type="Gene3D" id="3.90.1150.170">
    <property type="match status" value="1"/>
</dbReference>
<dbReference type="Gene3D" id="3.40.640.10">
    <property type="entry name" value="Type I PLP-dependent aspartate aminotransferase-like (Major domain)"/>
    <property type="match status" value="1"/>
</dbReference>
<dbReference type="InterPro" id="IPR002129">
    <property type="entry name" value="PyrdxlP-dep_de-COase"/>
</dbReference>
<dbReference type="InterPro" id="IPR015424">
    <property type="entry name" value="PyrdxlP-dep_Trfase"/>
</dbReference>
<dbReference type="InterPro" id="IPR015421">
    <property type="entry name" value="PyrdxlP-dep_Trfase_major"/>
</dbReference>
<dbReference type="InterPro" id="IPR021115">
    <property type="entry name" value="Pyridoxal-P_BS"/>
</dbReference>
<dbReference type="PANTHER" id="PTHR45677:SF11">
    <property type="entry name" value="GLUTAMATE DECARBOXYLASE 2"/>
    <property type="match status" value="1"/>
</dbReference>
<dbReference type="PANTHER" id="PTHR45677">
    <property type="entry name" value="GLUTAMATE DECARBOXYLASE-RELATED"/>
    <property type="match status" value="1"/>
</dbReference>
<dbReference type="Pfam" id="PF00282">
    <property type="entry name" value="Pyridoxal_deC"/>
    <property type="match status" value="1"/>
</dbReference>
<dbReference type="SUPFAM" id="SSF53383">
    <property type="entry name" value="PLP-dependent transferases"/>
    <property type="match status" value="1"/>
</dbReference>
<dbReference type="PROSITE" id="PS00392">
    <property type="entry name" value="DDC_GAD_HDC_YDC"/>
    <property type="match status" value="1"/>
</dbReference>
<proteinExistence type="evidence at protein level"/>
<feature type="chain" id="PRO_0000146968" description="Glutamate decarboxylase 2">
    <location>
        <begin position="1"/>
        <end position="585"/>
    </location>
</feature>
<feature type="region of interest" description="Disordered" evidence="1">
    <location>
        <begin position="1"/>
        <end position="24"/>
    </location>
</feature>
<feature type="compositionally biased region" description="Low complexity" evidence="1">
    <location>
        <begin position="1"/>
        <end position="14"/>
    </location>
</feature>
<feature type="binding site">
    <location>
        <begin position="181"/>
        <end position="183"/>
    </location>
    <ligand>
        <name>substrate</name>
    </ligand>
</feature>
<feature type="binding site" evidence="4">
    <location>
        <position position="558"/>
    </location>
    <ligand>
        <name>substrate</name>
    </ligand>
</feature>
<feature type="modified residue" description="Phosphoserine" evidence="5">
    <location>
        <position position="3"/>
    </location>
</feature>
<feature type="modified residue" description="Phosphoserine" evidence="5">
    <location>
        <position position="6"/>
    </location>
</feature>
<feature type="modified residue" description="Phosphoserine" evidence="5">
    <location>
        <position position="10"/>
    </location>
</feature>
<feature type="modified residue" description="Phosphoserine" evidence="5">
    <location>
        <position position="13"/>
    </location>
</feature>
<feature type="modified residue" description="N6-(pyridoxal phosphate)lysine">
    <location>
        <position position="396"/>
    </location>
</feature>
<feature type="lipid moiety-binding region" description="S-palmitoyl cysteine" evidence="3">
    <location>
        <position position="30"/>
    </location>
</feature>
<feature type="lipid moiety-binding region" description="S-palmitoyl cysteine" evidence="3">
    <location>
        <position position="45"/>
    </location>
</feature>
<feature type="sequence variant" id="VAR_018821" description="In dbSNP:rs8190591." evidence="6">
    <original>G</original>
    <variation>R</variation>
    <location>
        <position position="12"/>
    </location>
</feature>
<feature type="sequence variant" id="VAR_018822" description="In dbSNP:rs8190600." evidence="6">
    <original>K</original>
    <variation>N</variation>
    <location>
        <position position="124"/>
    </location>
</feature>
<feature type="sequence variant" id="VAR_029176" description="In dbSNP:rs2839672.">
    <original>P</original>
    <variation>Q</variation>
    <location>
        <position position="153"/>
    </location>
</feature>
<feature type="sequence variant" id="VAR_029177" description="In dbSNP:rs2839673.">
    <original>G</original>
    <variation>E</variation>
    <location>
        <position position="232"/>
    </location>
</feature>
<feature type="sequence variant" id="VAR_018823" description="In dbSNP:rs8190671." evidence="6">
    <original>K</original>
    <variation>R</variation>
    <location>
        <position position="286"/>
    </location>
</feature>
<feature type="sequence variant" id="VAR_029178" description="In dbSNP:rs2839678.">
    <original>G</original>
    <variation>A</variation>
    <location>
        <position position="326"/>
    </location>
</feature>
<feature type="sequence variant" id="VAR_018824" description="In dbSNP:rs8190730." evidence="6">
    <original>R</original>
    <variation>Q</variation>
    <location>
        <position position="375"/>
    </location>
</feature>
<feature type="mutagenesis site" description="No effect on glutamate decarboxylase activity." evidence="5">
    <original>SPGSGFWSFGS</original>
    <variation>APGAGFWAFGA</variation>
    <location>
        <begin position="3"/>
        <end position="13"/>
    </location>
</feature>
<feature type="helix" evidence="10">
    <location>
        <begin position="89"/>
        <end position="91"/>
    </location>
</feature>
<feature type="helix" evidence="10">
    <location>
        <begin position="94"/>
        <end position="96"/>
    </location>
</feature>
<feature type="helix" evidence="10">
    <location>
        <begin position="104"/>
        <end position="126"/>
    </location>
</feature>
<feature type="helix" evidence="10">
    <location>
        <begin position="138"/>
        <end position="144"/>
    </location>
</feature>
<feature type="helix" evidence="10">
    <location>
        <begin position="156"/>
        <end position="169"/>
    </location>
</feature>
<feature type="strand" evidence="10">
    <location>
        <begin position="178"/>
        <end position="183"/>
    </location>
</feature>
<feature type="helix" evidence="10">
    <location>
        <begin position="188"/>
        <end position="200"/>
    </location>
</feature>
<feature type="turn" evidence="10">
    <location>
        <begin position="207"/>
        <end position="209"/>
    </location>
</feature>
<feature type="helix" evidence="10">
    <location>
        <begin position="211"/>
        <end position="228"/>
    </location>
</feature>
<feature type="helix" evidence="10">
    <location>
        <begin position="231"/>
        <end position="233"/>
    </location>
</feature>
<feature type="strand" evidence="10">
    <location>
        <begin position="235"/>
        <end position="242"/>
    </location>
</feature>
<feature type="helix" evidence="10">
    <location>
        <begin position="243"/>
        <end position="258"/>
    </location>
</feature>
<feature type="helix" evidence="10">
    <location>
        <begin position="262"/>
        <end position="265"/>
    </location>
</feature>
<feature type="helix" evidence="10">
    <location>
        <begin position="267"/>
        <end position="269"/>
    </location>
</feature>
<feature type="strand" evidence="10">
    <location>
        <begin position="273"/>
        <end position="278"/>
    </location>
</feature>
<feature type="helix" evidence="10">
    <location>
        <begin position="284"/>
        <end position="291"/>
    </location>
</feature>
<feature type="helix" evidence="10">
    <location>
        <begin position="296"/>
        <end position="298"/>
    </location>
</feature>
<feature type="strand" evidence="10">
    <location>
        <begin position="299"/>
        <end position="302"/>
    </location>
</feature>
<feature type="helix" evidence="10">
    <location>
        <begin position="312"/>
        <end position="324"/>
    </location>
</feature>
<feature type="strand" evidence="10">
    <location>
        <begin position="328"/>
        <end position="337"/>
    </location>
</feature>
<feature type="turn" evidence="10">
    <location>
        <begin position="339"/>
        <end position="341"/>
    </location>
</feature>
<feature type="helix" evidence="10">
    <location>
        <begin position="347"/>
        <end position="357"/>
    </location>
</feature>
<feature type="strand" evidence="10">
    <location>
        <begin position="360"/>
        <end position="365"/>
    </location>
</feature>
<feature type="helix" evidence="10">
    <location>
        <begin position="368"/>
        <end position="373"/>
    </location>
</feature>
<feature type="turn" evidence="10">
    <location>
        <begin position="375"/>
        <end position="377"/>
    </location>
</feature>
<feature type="helix" evidence="10">
    <location>
        <begin position="378"/>
        <end position="381"/>
    </location>
</feature>
<feature type="helix" evidence="10">
    <location>
        <begin position="384"/>
        <end position="386"/>
    </location>
</feature>
<feature type="strand" evidence="10">
    <location>
        <begin position="388"/>
        <end position="392"/>
    </location>
</feature>
<feature type="strand" evidence="10">
    <location>
        <begin position="405"/>
        <end position="411"/>
    </location>
</feature>
<feature type="helix" evidence="10">
    <location>
        <begin position="414"/>
        <end position="419"/>
    </location>
</feature>
<feature type="helix" evidence="10">
    <location>
        <begin position="435"/>
        <end position="437"/>
    </location>
</feature>
<feature type="helix" evidence="10">
    <location>
        <begin position="440"/>
        <end position="442"/>
    </location>
</feature>
<feature type="helix" evidence="10">
    <location>
        <begin position="452"/>
        <end position="486"/>
    </location>
</feature>
<feature type="strand" evidence="10">
    <location>
        <begin position="491"/>
        <end position="497"/>
    </location>
</feature>
<feature type="strand" evidence="10">
    <location>
        <begin position="500"/>
        <end position="502"/>
    </location>
</feature>
<feature type="strand" evidence="10">
    <location>
        <begin position="504"/>
        <end position="508"/>
    </location>
</feature>
<feature type="turn" evidence="10">
    <location>
        <begin position="511"/>
        <end position="515"/>
    </location>
</feature>
<feature type="helix" evidence="10">
    <location>
        <begin position="523"/>
        <end position="526"/>
    </location>
</feature>
<feature type="helix" evidence="10">
    <location>
        <begin position="529"/>
        <end position="540"/>
    </location>
</feature>
<feature type="strand" evidence="10">
    <location>
        <begin position="544"/>
        <end position="550"/>
    </location>
</feature>
<feature type="strand" evidence="10">
    <location>
        <begin position="553"/>
        <end position="559"/>
    </location>
</feature>
<feature type="helix" evidence="10">
    <location>
        <begin position="568"/>
        <end position="581"/>
    </location>
</feature>
<sequence>MASPGSGFWSFGSEDGSGDSENPGTARAWCQVAQKFTGGIGNKLCALLYGDAEKPAESGGSQPPRAAARKAACACDQKPCSCSKVDVNYAFLHATDLLPACDGERPTLAFLQDVMNILLQYVVKSFDRSTKVIDFHYPNELLQEYNWELADQPQNLEEILMHCQTTLKYAIKTGHPRYFNQLSTGLDMVGLAADWLTSTANTNMFTYEIAPVFVLLEYVTLKKMREIIGWPGGSGDGIFSPGGAISNMYAMMIARFKMFPEVKEKGMAALPRLIAFTSEHSHFSLKKGAAALGIGTDSVILIKCDERGKMIPSDLERRILEAKQKGFVPFLVSATAGTTVYGAFDPLLAVADICKKYKIWMHVDAAWGGGLLMSRKHKWKLSGVERANSVTWNPHKMMGVPLQCSALLVREEGLMQNCNQMHASYLFQQDKHYDLSYDTGDKALQCGRHVDVFKLWLMWRAKGTTGFEAHVDKCLELAEYLYNIIKNREGYEMVFDGKPQHTNVCFWYIPPSLRTLEDNEERMSRLSKVAPVIKARMMEYGTTMVSYQPLGDKVNFFRMVISNPAATHQDIDFLIEEIERLGQDL</sequence>
<reference key="1">
    <citation type="journal article" date="1991" name="Proc. Natl. Acad. Sci. U.S.A.">
        <title>Cloning and primary structure of a human islet isoform of glutamic acid decarboxylase from chromosome 10.</title>
        <authorList>
            <person name="Karlsen A.E."/>
            <person name="Hagopian W.A."/>
            <person name="Grubin C.E."/>
            <person name="Dube S."/>
            <person name="Disteche C.M."/>
            <person name="Adler D.A."/>
            <person name="Barmeier H."/>
            <person name="Mathewes S."/>
            <person name="Grant F.J."/>
            <person name="Foster D."/>
            <person name="Lernmark A."/>
        </authorList>
    </citation>
    <scope>NUCLEOTIDE SEQUENCE [MRNA]</scope>
    <source>
        <tissue>Pancreatic islet</tissue>
    </source>
</reference>
<reference key="2">
    <citation type="journal article" date="1992" name="Proc. Natl. Acad. Sci. U.S.A.">
        <title>Two human glutamate decarboxylases, 65-kDa GAD and 67-kDa GAD, are each encoded by a single gene.</title>
        <authorList>
            <person name="Bu D.-F."/>
            <person name="Erlander M.G."/>
            <person name="Hitz B.C."/>
            <person name="Tillakaratne N.J."/>
            <person name="Kaufman D.L."/>
            <person name="Wagner-Mcpherson C.B."/>
            <person name="Evans G.A."/>
            <person name="Tobin A.J."/>
        </authorList>
    </citation>
    <scope>NUCLEOTIDE SEQUENCE [MRNA]</scope>
</reference>
<reference key="3">
    <citation type="journal article" date="1994" name="Genomics">
        <title>The exon-intron organization of the genes (GAD1 and GAD2) encoding two human glutamate decarboxylases (GAD67 and GAD65) suggests that they derive from a common ancestral GAD.</title>
        <authorList>
            <person name="Bu D.-F."/>
            <person name="Tobin A.J."/>
        </authorList>
    </citation>
    <scope>NUCLEOTIDE SEQUENCE [MRNA]</scope>
</reference>
<reference key="4">
    <citation type="submission" date="2003-07" db="EMBL/GenBank/DDBJ databases">
        <authorList>
            <consortium name="NIEHS SNPs program"/>
        </authorList>
    </citation>
    <scope>NUCLEOTIDE SEQUENCE [GENOMIC DNA]</scope>
    <scope>VARIANTS ARG-12; ASN-124; ARG-286 AND GLN-375</scope>
</reference>
<reference key="5">
    <citation type="journal article" date="1993" name="Eur. J. Biochem.">
        <title>Characterization of a linear epitope within the human pancreatic 64-kDa glutamic acid decarboxylase and its autoimmune recognition by sera from insulin-dependent diabetes mellitus patients.</title>
        <authorList>
            <person name="Mauch L."/>
            <person name="Abney C.C."/>
            <person name="Berg H."/>
            <person name="Scherbaum W.A."/>
            <person name="Liedvogel B."/>
            <person name="Northemann W."/>
        </authorList>
    </citation>
    <scope>NUCLEOTIDE SEQUENCE [MRNA] OF 6-585</scope>
    <source>
        <tissue>Pancreas</tissue>
    </source>
</reference>
<reference key="6">
    <citation type="journal article" date="1993" name="Diabetes">
        <title>Differential expression of GAD65 and GAD67 in human, rat, and mouse pancreatic islets.</title>
        <authorList>
            <person name="Kim J."/>
            <person name="Richter W."/>
            <person name="Aanstoot H.-J."/>
            <person name="Shi Y."/>
            <person name="Fu Q."/>
            <person name="Rajotte R."/>
            <person name="Warnock G."/>
            <person name="Baekkeskov S."/>
        </authorList>
    </citation>
    <scope>NUCLEOTIDE SEQUENCE [MRNA] OF 245-585</scope>
</reference>
<reference key="7">
    <citation type="journal article" date="1997" name="J. Biol. Chem.">
        <title>Phosphorylation of serine residues 3, 6, 10, and 13 distinguishes membrane anchored from soluble glutamic acid decarboxylase 65 and is restricted to glutamic acid decarboxylase 65alpha.</title>
        <authorList>
            <person name="Namchuk M."/>
            <person name="Lindsay L."/>
            <person name="Turck C.W."/>
            <person name="Kanaani J."/>
            <person name="Baekkeskov S."/>
        </authorList>
    </citation>
    <scope>PHOSPHORYLATION AT SER-3; SER-6; SER-10 AND SER-13</scope>
    <scope>BIOPHYSICOCHEMICAL PROPERTIES</scope>
    <scope>CATALYTIC ACTIVITY</scope>
    <scope>FUNCTION</scope>
    <scope>MUTAGENESIS OF 3-SER--SER-13</scope>
</reference>
<reference key="8">
    <citation type="journal article" date="2002" name="J. Cell Biol.">
        <title>A combination of three distinct trafficking signals mediates axonal targeting and presynaptic clustering of GAD65.</title>
        <authorList>
            <person name="Kanaani J."/>
            <person name="El-Din El-Husseini A."/>
            <person name="Aguilera-Moreno A."/>
            <person name="Diacovo J.M."/>
            <person name="Bredt D.S."/>
            <person name="Baekkeskov S."/>
        </authorList>
    </citation>
    <scope>SUBCELLULAR LOCATION</scope>
    <scope>PALMITOYLATION AT CYS-30 AND CYS-45</scope>
</reference>
<reference key="9">
    <citation type="journal article" date="2000" name="Science">
        <title>A structural framework for deciphering the link between I-Ag7 and autoimmune diabetes.</title>
        <authorList>
            <person name="Corper A.L."/>
            <person name="Stratmann T."/>
            <person name="Apostolopoulos V."/>
            <person name="Scott C.A."/>
            <person name="Garcia K.C."/>
            <person name="Kang A.S."/>
            <person name="Wilson I.A."/>
            <person name="Teyton L."/>
        </authorList>
    </citation>
    <scope>X-RAY CRYSTALLOGRAPHY (2.6 ANGSTROMS) OF 222-235 IN COMPLEX WITH MHC</scope>
</reference>
<reference key="10">
    <citation type="journal article" date="2007" name="Nat. Struct. Mol. Biol.">
        <title>GABA production by glutamic acid decarboxylase is regulated by a dynamic catalytic loop.</title>
        <authorList>
            <person name="Fenalti G."/>
            <person name="Law R.H.P."/>
            <person name="Buckle A.M."/>
            <person name="Langendorf C."/>
            <person name="Tuck K."/>
            <person name="Rosado C.J."/>
            <person name="Faux N.G."/>
            <person name="Mahmood K."/>
            <person name="Hampe C.S."/>
            <person name="Banga J.P."/>
            <person name="Wilce M."/>
            <person name="Schmidberger J."/>
            <person name="Rossjohn J."/>
            <person name="El-Kabbani O."/>
            <person name="Pike R.N."/>
            <person name="Smith A.I."/>
            <person name="Mackay I.R."/>
            <person name="Rowley M.J."/>
            <person name="Whisstock J.C."/>
        </authorList>
    </citation>
    <scope>X-RAY CRYSTALLOGRAPHY (2.3 ANGSTROMS) OF 88-584 IN COMPLEX WITH SUBSTRATE</scope>
    <scope>SUBUNIT</scope>
    <scope>COFACTOR</scope>
</reference>
<gene>
    <name evidence="9" type="primary">GAD2</name>
    <name type="synonym">GAD65</name>
</gene>
<accession>Q05329</accession>
<accession>Q9UD87</accession>
<evidence type="ECO:0000256" key="1">
    <source>
        <dbReference type="SAM" id="MobiDB-lite"/>
    </source>
</evidence>
<evidence type="ECO:0000269" key="2">
    <source>
    </source>
</evidence>
<evidence type="ECO:0000269" key="3">
    <source>
    </source>
</evidence>
<evidence type="ECO:0000269" key="4">
    <source>
    </source>
</evidence>
<evidence type="ECO:0000269" key="5">
    <source>
    </source>
</evidence>
<evidence type="ECO:0000269" key="6">
    <source ref="4"/>
</evidence>
<evidence type="ECO:0000305" key="7"/>
<evidence type="ECO:0000305" key="8">
    <source>
    </source>
</evidence>
<evidence type="ECO:0000312" key="9">
    <source>
        <dbReference type="HGNC" id="HGNC:4093"/>
    </source>
</evidence>
<evidence type="ECO:0007829" key="10">
    <source>
        <dbReference type="PDB" id="2OKK"/>
    </source>
</evidence>
<comment type="function">
    <text evidence="8">Catalyzes the production of GABA.</text>
</comment>
<comment type="catalytic activity">
    <reaction evidence="8">
        <text>L-glutamate + H(+) = 4-aminobutanoate + CO2</text>
        <dbReference type="Rhea" id="RHEA:17785"/>
        <dbReference type="ChEBI" id="CHEBI:15378"/>
        <dbReference type="ChEBI" id="CHEBI:16526"/>
        <dbReference type="ChEBI" id="CHEBI:29985"/>
        <dbReference type="ChEBI" id="CHEBI:59888"/>
        <dbReference type="EC" id="4.1.1.15"/>
    </reaction>
    <physiologicalReaction direction="left-to-right" evidence="8">
        <dbReference type="Rhea" id="RHEA:17786"/>
    </physiologicalReaction>
</comment>
<comment type="cofactor">
    <cofactor evidence="4">
        <name>pyridoxal 5'-phosphate</name>
        <dbReference type="ChEBI" id="CHEBI:597326"/>
    </cofactor>
</comment>
<comment type="biophysicochemical properties">
    <kinetics>
        <KM evidence="5">2.15 mM for glutamate</KM>
    </kinetics>
</comment>
<comment type="subunit">
    <text evidence="2 4">Homodimer.</text>
</comment>
<comment type="interaction">
    <interactant intactId="EBI-9304251">
        <id>Q05329</id>
    </interactant>
    <interactant intactId="EBI-2813554">
        <id>Q8WTS1</id>
        <label>ABHD5</label>
    </interactant>
    <organismsDiffer>false</organismsDiffer>
    <experiments>3</experiments>
</comment>
<comment type="interaction">
    <interactant intactId="EBI-9304251">
        <id>Q05329</id>
    </interactant>
    <interactant intactId="EBI-741181">
        <id>Q6RW13</id>
        <label>AGTRAP</label>
    </interactant>
    <organismsDiffer>false</organismsDiffer>
    <experiments>3</experiments>
</comment>
<comment type="interaction">
    <interactant intactId="EBI-9304251">
        <id>Q05329</id>
    </interactant>
    <interactant intactId="EBI-11522760">
        <id>Q6RW13-2</id>
        <label>AGTRAP</label>
    </interactant>
    <organismsDiffer>false</organismsDiffer>
    <experiments>3</experiments>
</comment>
<comment type="interaction">
    <interactant intactId="EBI-9304251">
        <id>Q05329</id>
    </interactant>
    <interactant intactId="EBI-18302142">
        <id>P55056</id>
        <label>APOC4</label>
    </interactant>
    <organismsDiffer>false</organismsDiffer>
    <experiments>3</experiments>
</comment>
<comment type="interaction">
    <interactant intactId="EBI-9304251">
        <id>Q05329</id>
    </interactant>
    <interactant intactId="EBI-11343438">
        <id>Q3SXY8</id>
        <label>ARL13B</label>
    </interactant>
    <organismsDiffer>false</organismsDiffer>
    <experiments>3</experiments>
</comment>
<comment type="interaction">
    <interactant intactId="EBI-9304251">
        <id>Q05329</id>
    </interactant>
    <interactant intactId="EBI-714543">
        <id>Q15041</id>
        <label>ARL6IP1</label>
    </interactant>
    <organismsDiffer>false</organismsDiffer>
    <experiments>6</experiments>
</comment>
<comment type="interaction">
    <interactant intactId="EBI-9304251">
        <id>Q05329</id>
    </interactant>
    <interactant intactId="EBI-36513937">
        <id>Q5T9G4-2</id>
        <label>ARMC12</label>
    </interactant>
    <organismsDiffer>false</organismsDiffer>
    <experiments>3</experiments>
</comment>
<comment type="interaction">
    <interactant intactId="EBI-9304251">
        <id>Q05329</id>
    </interactant>
    <interactant intactId="EBI-7996695">
        <id>Q8WZ55</id>
        <label>BSND</label>
    </interactant>
    <organismsDiffer>false</organismsDiffer>
    <experiments>3</experiments>
</comment>
<comment type="interaction">
    <interactant intactId="EBI-9304251">
        <id>Q05329</id>
    </interactant>
    <interactant intactId="EBI-9686780">
        <id>Q06432</id>
        <label>CACNG1</label>
    </interactant>
    <organismsDiffer>false</organismsDiffer>
    <experiments>3</experiments>
</comment>
<comment type="interaction">
    <interactant intactId="EBI-9304251">
        <id>Q05329</id>
    </interactant>
    <interactant intactId="EBI-2548702">
        <id>Q96DZ9</id>
        <label>CMTM5</label>
    </interactant>
    <organismsDiffer>false</organismsDiffer>
    <experiments>3</experiments>
</comment>
<comment type="interaction">
    <interactant intactId="EBI-9304251">
        <id>Q05329</id>
    </interactant>
    <interactant intactId="EBI-11522780">
        <id>Q96DZ9-2</id>
        <label>CMTM5</label>
    </interactant>
    <organismsDiffer>false</organismsDiffer>
    <experiments>3</experiments>
</comment>
<comment type="interaction">
    <interactant intactId="EBI-9304251">
        <id>Q05329</id>
    </interactant>
    <interactant intactId="EBI-18013275">
        <id>Q7Z7G2</id>
        <label>CPLX4</label>
    </interactant>
    <organismsDiffer>false</organismsDiffer>
    <experiments>3</experiments>
</comment>
<comment type="interaction">
    <interactant intactId="EBI-9304251">
        <id>Q05329</id>
    </interactant>
    <interactant intactId="EBI-12873482">
        <id>Q8N8Q1</id>
        <label>CYB561D1</label>
    </interactant>
    <organismsDiffer>false</organismsDiffer>
    <experiments>3</experiments>
</comment>
<comment type="interaction">
    <interactant intactId="EBI-9304251">
        <id>Q05329</id>
    </interactant>
    <interactant intactId="EBI-398977">
        <id>Q9BUN8</id>
        <label>DERL1</label>
    </interactant>
    <organismsDiffer>false</organismsDiffer>
    <experiments>3</experiments>
</comment>
<comment type="interaction">
    <interactant intactId="EBI-9304251">
        <id>Q05329</id>
    </interactant>
    <interactant intactId="EBI-12831318">
        <id>Q96Q80</id>
        <label>DERL3</label>
    </interactant>
    <organismsDiffer>false</organismsDiffer>
    <experiments>3</experiments>
</comment>
<comment type="interaction">
    <interactant intactId="EBI-9304251">
        <id>Q05329</id>
    </interactant>
    <interactant intactId="EBI-12831978">
        <id>Q6ZPD8</id>
        <label>DGAT2L6</label>
    </interactant>
    <organismsDiffer>false</organismsDiffer>
    <experiments>3</experiments>
</comment>
<comment type="interaction">
    <interactant intactId="EBI-9304251">
        <id>Q05329</id>
    </interactant>
    <interactant intactId="EBI-7943171">
        <id>Q6E0U4</id>
        <label>DMKN</label>
    </interactant>
    <organismsDiffer>false</organismsDiffer>
    <experiments>3</experiments>
</comment>
<comment type="interaction">
    <interactant intactId="EBI-9304251">
        <id>Q05329</id>
    </interactant>
    <interactant intactId="EBI-3943864">
        <id>Q8N9I5</id>
        <label>FADS6</label>
    </interactant>
    <organismsDiffer>false</organismsDiffer>
    <experiments>3</experiments>
</comment>
<comment type="interaction">
    <interactant intactId="EBI-9304251">
        <id>Q05329</id>
    </interactant>
    <interactant intactId="EBI-10973142">
        <id>Q9NRY5</id>
        <label>FAM114A2</label>
    </interactant>
    <organismsDiffer>false</organismsDiffer>
    <experiments>3</experiments>
</comment>
<comment type="interaction">
    <interactant intactId="EBI-9304251">
        <id>Q05329</id>
    </interactant>
    <interactant intactId="EBI-11793142">
        <id>Q96GL9</id>
        <label>FAM163A</label>
    </interactant>
    <organismsDiffer>false</organismsDiffer>
    <experiments>3</experiments>
</comment>
<comment type="interaction">
    <interactant intactId="EBI-9304251">
        <id>Q05329</id>
    </interactant>
    <interactant intactId="EBI-12809676">
        <id>A8MV81</id>
        <label>HIGD1C</label>
    </interactant>
    <organismsDiffer>false</organismsDiffer>
    <experiments>3</experiments>
</comment>
<comment type="interaction">
    <interactant intactId="EBI-9304251">
        <id>Q05329</id>
    </interactant>
    <interactant intactId="EBI-7055862">
        <id>Q96B96</id>
        <label>LDAF1</label>
    </interactant>
    <organismsDiffer>false</organismsDiffer>
    <experiments>6</experiments>
</comment>
<comment type="interaction">
    <interactant intactId="EBI-9304251">
        <id>Q05329</id>
    </interactant>
    <interactant intactId="EBI-2830566">
        <id>Q9H400</id>
        <label>LIME1</label>
    </interactant>
    <organismsDiffer>false</organismsDiffer>
    <experiments>3</experiments>
</comment>
<comment type="interaction">
    <interactant intactId="EBI-9304251">
        <id>Q05329</id>
    </interactant>
    <interactant intactId="EBI-944295">
        <id>Q969L2</id>
        <label>MAL2</label>
    </interactant>
    <organismsDiffer>false</organismsDiffer>
    <experiments>6</experiments>
</comment>
<comment type="interaction">
    <interactant intactId="EBI-9304251">
        <id>Q05329</id>
    </interactant>
    <interactant intactId="EBI-1050204">
        <id>Q5EB52</id>
        <label>MEST</label>
    </interactant>
    <organismsDiffer>false</organismsDiffer>
    <experiments>3</experiments>
</comment>
<comment type="interaction">
    <interactant intactId="EBI-9304251">
        <id>Q05329</id>
    </interactant>
    <interactant intactId="EBI-1045440">
        <id>Q9HC36</id>
        <label>MRM3</label>
    </interactant>
    <organismsDiffer>false</organismsDiffer>
    <experiments>3</experiments>
</comment>
<comment type="interaction">
    <interactant intactId="EBI-9304251">
        <id>Q05329</id>
    </interactant>
    <interactant intactId="EBI-741171">
        <id>Q96AL5</id>
        <label>PBX3</label>
    </interactant>
    <organismsDiffer>false</organismsDiffer>
    <experiments>3</experiments>
</comment>
<comment type="interaction">
    <interactant intactId="EBI-9304251">
        <id>Q05329</id>
    </interactant>
    <interactant intactId="EBI-725795">
        <id>O60664</id>
        <label>PLIN3</label>
    </interactant>
    <organismsDiffer>false</organismsDiffer>
    <experiments>3</experiments>
</comment>
<comment type="interaction">
    <interactant intactId="EBI-9304251">
        <id>Q05329</id>
    </interactant>
    <interactant intactId="EBI-11913715">
        <id>Q8IZV5</id>
        <label>RDH10</label>
    </interactant>
    <organismsDiffer>false</organismsDiffer>
    <experiments>3</experiments>
</comment>
<comment type="interaction">
    <interactant intactId="EBI-9304251">
        <id>Q05329</id>
    </interactant>
    <interactant intactId="EBI-18304046">
        <id>Q6ZWK4</id>
        <label>RHEX</label>
    </interactant>
    <organismsDiffer>false</organismsDiffer>
    <experiments>3</experiments>
</comment>
<comment type="interaction">
    <interactant intactId="EBI-9304251">
        <id>Q05329</id>
    </interactant>
    <interactant intactId="EBI-1052363">
        <id>Q9NS64</id>
        <label>RPRM</label>
    </interactant>
    <organismsDiffer>false</organismsDiffer>
    <experiments>3</experiments>
</comment>
<comment type="interaction">
    <interactant intactId="EBI-9304251">
        <id>Q05329</id>
    </interactant>
    <interactant intactId="EBI-954338">
        <id>O15126</id>
        <label>SCAMP1</label>
    </interactant>
    <organismsDiffer>false</organismsDiffer>
    <experiments>3</experiments>
</comment>
<comment type="interaction">
    <interactant intactId="EBI-9304251">
        <id>Q05329</id>
    </interactant>
    <interactant intactId="EBI-3923480">
        <id>Q8N3Y7</id>
        <label>SDR16C5</label>
    </interactant>
    <organismsDiffer>false</organismsDiffer>
    <experiments>3</experiments>
</comment>
<comment type="interaction">
    <interactant intactId="EBI-9304251">
        <id>Q05329</id>
    </interactant>
    <interactant intactId="EBI-8652744">
        <id>Q96IW7</id>
        <label>SEC22A</label>
    </interactant>
    <organismsDiffer>false</organismsDiffer>
    <experiments>3</experiments>
</comment>
<comment type="interaction">
    <interactant intactId="EBI-9304251">
        <id>Q05329</id>
    </interactant>
    <interactant intactId="EBI-12828299">
        <id>O60906</id>
        <label>SMPD2</label>
    </interactant>
    <organismsDiffer>false</organismsDiffer>
    <experiments>3</experiments>
</comment>
<comment type="interaction">
    <interactant intactId="EBI-9304251">
        <id>Q05329</id>
    </interactant>
    <interactant intactId="EBI-742688">
        <id>Q9NZD8</id>
        <label>SPG21</label>
    </interactant>
    <organismsDiffer>false</organismsDiffer>
    <experiments>3</experiments>
</comment>
<comment type="interaction">
    <interactant intactId="EBI-9304251">
        <id>Q05329</id>
    </interactant>
    <interactant intactId="EBI-11958386">
        <id>Q6PIF2</id>
        <label>SYCE2</label>
    </interactant>
    <organismsDiffer>false</organismsDiffer>
    <experiments>3</experiments>
</comment>
<comment type="interaction">
    <interactant intactId="EBI-9304251">
        <id>Q05329</id>
    </interactant>
    <interactant intactId="EBI-11321949">
        <id>O43761</id>
        <label>SYNGR3</label>
    </interactant>
    <organismsDiffer>false</organismsDiffer>
    <experiments>3</experiments>
</comment>
<comment type="interaction">
    <interactant intactId="EBI-9304251">
        <id>Q05329</id>
    </interactant>
    <interactant intactId="EBI-10171534">
        <id>A0PK00</id>
        <label>TMEM120B</label>
    </interactant>
    <organismsDiffer>false</organismsDiffer>
    <experiments>3</experiments>
</comment>
<comment type="interaction">
    <interactant intactId="EBI-9304251">
        <id>Q05329</id>
    </interactant>
    <interactant intactId="EBI-10694905">
        <id>Q5BJH2-2</id>
        <label>TMEM128</label>
    </interactant>
    <organismsDiffer>false</organismsDiffer>
    <experiments>3</experiments>
</comment>
<comment type="interaction">
    <interactant intactId="EBI-9304251">
        <id>Q05329</id>
    </interactant>
    <interactant intactId="EBI-1044859">
        <id>Q9UBN6</id>
        <label>TNFRSF10D</label>
    </interactant>
    <organismsDiffer>false</organismsDiffer>
    <experiments>3</experiments>
</comment>
<comment type="interaction">
    <interactant intactId="EBI-9304251">
        <id>Q05329</id>
    </interactant>
    <interactant intactId="EBI-12045841">
        <id>Q86UF1</id>
        <label>TSPAN33</label>
    </interactant>
    <organismsDiffer>false</organismsDiffer>
    <experiments>3</experiments>
</comment>
<comment type="subcellular location">
    <subcellularLocation>
        <location evidence="3">Cytoplasm</location>
        <location evidence="3">Cytosol</location>
    </subcellularLocation>
    <subcellularLocation>
        <location evidence="3">Cytoplasmic vesicle</location>
    </subcellularLocation>
    <subcellularLocation>
        <location evidence="3">Presynaptic cell membrane</location>
        <topology evidence="3">Lipid-anchor</topology>
    </subcellularLocation>
    <subcellularLocation>
        <location evidence="3">Golgi apparatus membrane</location>
        <topology evidence="3">Peripheral membrane protein</topology>
        <orientation evidence="3">Cytoplasmic side</orientation>
    </subcellularLocation>
    <text>Associated to cytoplasmic vesicles. In neurons, cytosolic leaflet of Golgi membranes and presynaptic clusters.</text>
</comment>
<comment type="PTM">
    <text evidence="5">Phosphorylated; which does not affect kinetic parameters or subcellular location.</text>
</comment>
<comment type="PTM">
    <text evidence="3">Palmitoylated; which is required for presynaptic clustering.</text>
</comment>
<comment type="similarity">
    <text evidence="7">Belongs to the group II decarboxylase family.</text>
</comment>
<comment type="sequence caution" evidence="7">
    <conflict type="erroneous initiation">
        <sequence resource="EMBL-CDS" id="CAA49554"/>
    </conflict>
    <text>Extended N-terminus.</text>
</comment>